<protein>
    <recommendedName>
        <fullName evidence="1">Riboflavin biosynthesis protein RibBA</fullName>
    </recommendedName>
    <domain>
        <recommendedName>
            <fullName evidence="1">3,4-dihydroxy-2-butanone 4-phosphate synthase</fullName>
            <shortName evidence="1">DHBP synthase</shortName>
            <ecNumber evidence="1">4.1.99.12</ecNumber>
        </recommendedName>
    </domain>
    <domain>
        <recommendedName>
            <fullName evidence="1">GTP cyclohydrolase-2</fullName>
            <ecNumber evidence="1">3.5.4.25</ecNumber>
        </recommendedName>
        <alternativeName>
            <fullName evidence="1">GTP cyclohydrolase II</fullName>
        </alternativeName>
    </domain>
</protein>
<keyword id="KW-0002">3D-structure</keyword>
<keyword id="KW-0342">GTP-binding</keyword>
<keyword id="KW-0378">Hydrolase</keyword>
<keyword id="KW-0456">Lyase</keyword>
<keyword id="KW-0460">Magnesium</keyword>
<keyword id="KW-0464">Manganese</keyword>
<keyword id="KW-0479">Metal-binding</keyword>
<keyword id="KW-0511">Multifunctional enzyme</keyword>
<keyword id="KW-0547">Nucleotide-binding</keyword>
<keyword id="KW-1185">Reference proteome</keyword>
<keyword id="KW-0686">Riboflavin biosynthesis</keyword>
<keyword id="KW-0862">Zinc</keyword>
<feature type="chain" id="PRO_1000067426" description="Riboflavin biosynthesis protein RibBA">
    <location>
        <begin position="1"/>
        <end position="425"/>
    </location>
</feature>
<feature type="region of interest" description="DHBP synthase">
    <location>
        <begin position="1"/>
        <end position="204"/>
    </location>
</feature>
<feature type="region of interest" description="GTP cyclohydrolase II">
    <location>
        <begin position="205"/>
        <end position="425"/>
    </location>
</feature>
<feature type="active site" description="Proton acceptor; for GTP cyclohydrolase activity" evidence="1">
    <location>
        <position position="337"/>
    </location>
</feature>
<feature type="active site" description="Nucleophile; for GTP cyclohydrolase activity" evidence="1">
    <location>
        <position position="339"/>
    </location>
</feature>
<feature type="binding site" evidence="1">
    <location>
        <begin position="28"/>
        <end position="29"/>
    </location>
    <ligand>
        <name>D-ribulose 5-phosphate</name>
        <dbReference type="ChEBI" id="CHEBI:58121"/>
    </ligand>
</feature>
<feature type="binding site" evidence="1">
    <location>
        <position position="29"/>
    </location>
    <ligand>
        <name>Mg(2+)</name>
        <dbReference type="ChEBI" id="CHEBI:18420"/>
        <label>1</label>
    </ligand>
</feature>
<feature type="binding site" evidence="1">
    <location>
        <position position="29"/>
    </location>
    <ligand>
        <name>Mg(2+)</name>
        <dbReference type="ChEBI" id="CHEBI:18420"/>
        <label>2</label>
    </ligand>
</feature>
<feature type="binding site" evidence="1">
    <location>
        <position position="33"/>
    </location>
    <ligand>
        <name>D-ribulose 5-phosphate</name>
        <dbReference type="ChEBI" id="CHEBI:58121"/>
    </ligand>
</feature>
<feature type="binding site" evidence="1">
    <location>
        <begin position="141"/>
        <end position="145"/>
    </location>
    <ligand>
        <name>D-ribulose 5-phosphate</name>
        <dbReference type="ChEBI" id="CHEBI:58121"/>
    </ligand>
</feature>
<feature type="binding site" evidence="1">
    <location>
        <position position="144"/>
    </location>
    <ligand>
        <name>Mg(2+)</name>
        <dbReference type="ChEBI" id="CHEBI:18420"/>
        <label>2</label>
    </ligand>
</feature>
<feature type="binding site" evidence="1">
    <location>
        <position position="165"/>
    </location>
    <ligand>
        <name>D-ribulose 5-phosphate</name>
        <dbReference type="ChEBI" id="CHEBI:58121"/>
    </ligand>
</feature>
<feature type="binding site" evidence="1">
    <location>
        <begin position="259"/>
        <end position="263"/>
    </location>
    <ligand>
        <name>GTP</name>
        <dbReference type="ChEBI" id="CHEBI:37565"/>
    </ligand>
</feature>
<feature type="binding site" evidence="1">
    <location>
        <position position="264"/>
    </location>
    <ligand>
        <name>Zn(2+)</name>
        <dbReference type="ChEBI" id="CHEBI:29105"/>
        <note>catalytic</note>
    </ligand>
</feature>
<feature type="binding site" evidence="1">
    <location>
        <position position="275"/>
    </location>
    <ligand>
        <name>Zn(2+)</name>
        <dbReference type="ChEBI" id="CHEBI:29105"/>
        <note>catalytic</note>
    </ligand>
</feature>
<feature type="binding site" evidence="1">
    <location>
        <position position="277"/>
    </location>
    <ligand>
        <name>Zn(2+)</name>
        <dbReference type="ChEBI" id="CHEBI:29105"/>
        <note>catalytic</note>
    </ligand>
</feature>
<feature type="binding site" evidence="1">
    <location>
        <position position="280"/>
    </location>
    <ligand>
        <name>GTP</name>
        <dbReference type="ChEBI" id="CHEBI:37565"/>
    </ligand>
</feature>
<feature type="binding site" evidence="1">
    <location>
        <begin position="303"/>
        <end position="305"/>
    </location>
    <ligand>
        <name>GTP</name>
        <dbReference type="ChEBI" id="CHEBI:37565"/>
    </ligand>
</feature>
<feature type="binding site" evidence="1">
    <location>
        <position position="325"/>
    </location>
    <ligand>
        <name>GTP</name>
        <dbReference type="ChEBI" id="CHEBI:37565"/>
    </ligand>
</feature>
<feature type="binding site" evidence="1">
    <location>
        <position position="360"/>
    </location>
    <ligand>
        <name>GTP</name>
        <dbReference type="ChEBI" id="CHEBI:37565"/>
    </ligand>
</feature>
<feature type="binding site" evidence="1">
    <location>
        <position position="365"/>
    </location>
    <ligand>
        <name>GTP</name>
        <dbReference type="ChEBI" id="CHEBI:37565"/>
    </ligand>
</feature>
<feature type="site" description="Essential for DHBP synthase activity" evidence="1">
    <location>
        <position position="127"/>
    </location>
</feature>
<feature type="site" description="Essential for DHBP synthase activity" evidence="1">
    <location>
        <position position="165"/>
    </location>
</feature>
<feature type="helix" evidence="2">
    <location>
        <begin position="7"/>
        <end position="15"/>
    </location>
</feature>
<feature type="strand" evidence="2">
    <location>
        <begin position="20"/>
        <end position="26"/>
    </location>
</feature>
<feature type="strand" evidence="2">
    <location>
        <begin position="33"/>
        <end position="37"/>
    </location>
</feature>
<feature type="helix" evidence="2">
    <location>
        <begin position="38"/>
        <end position="40"/>
    </location>
</feature>
<feature type="helix" evidence="2">
    <location>
        <begin position="43"/>
        <end position="52"/>
    </location>
</feature>
<feature type="strand" evidence="3">
    <location>
        <begin position="53"/>
        <end position="55"/>
    </location>
</feature>
<feature type="strand" evidence="2">
    <location>
        <begin position="58"/>
        <end position="61"/>
    </location>
</feature>
<feature type="helix" evidence="2">
    <location>
        <begin position="63"/>
        <end position="68"/>
    </location>
</feature>
<feature type="strand" evidence="2">
    <location>
        <begin position="90"/>
        <end position="95"/>
    </location>
</feature>
<feature type="strand" evidence="2">
    <location>
        <begin position="97"/>
        <end position="99"/>
    </location>
</feature>
<feature type="helix" evidence="2">
    <location>
        <begin position="102"/>
        <end position="113"/>
    </location>
</feature>
<feature type="helix" evidence="2">
    <location>
        <begin position="119"/>
        <end position="121"/>
    </location>
</feature>
<feature type="strand" evidence="2">
    <location>
        <begin position="122"/>
        <end position="132"/>
    </location>
</feature>
<feature type="helix" evidence="2">
    <location>
        <begin position="137"/>
        <end position="139"/>
    </location>
</feature>
<feature type="helix" evidence="2">
    <location>
        <begin position="144"/>
        <end position="154"/>
    </location>
</feature>
<feature type="strand" evidence="2">
    <location>
        <begin position="159"/>
        <end position="167"/>
    </location>
</feature>
<feature type="strand" evidence="2">
    <location>
        <begin position="169"/>
        <end position="171"/>
    </location>
</feature>
<feature type="helix" evidence="2">
    <location>
        <begin position="178"/>
        <end position="188"/>
    </location>
</feature>
<feature type="strand" evidence="2">
    <location>
        <begin position="191"/>
        <end position="194"/>
    </location>
</feature>
<feature type="helix" evidence="2">
    <location>
        <begin position="195"/>
        <end position="204"/>
    </location>
</feature>
<feature type="strand" evidence="4">
    <location>
        <begin position="209"/>
        <end position="219"/>
    </location>
</feature>
<feature type="strand" evidence="4">
    <location>
        <begin position="222"/>
        <end position="231"/>
    </location>
</feature>
<feature type="strand" evidence="4">
    <location>
        <begin position="237"/>
        <end position="244"/>
    </location>
</feature>
<feature type="strand" evidence="4">
    <location>
        <begin position="255"/>
        <end position="262"/>
    </location>
</feature>
<feature type="helix" evidence="4">
    <location>
        <begin position="265"/>
        <end position="268"/>
    </location>
</feature>
<feature type="helix" evidence="4">
    <location>
        <begin position="277"/>
        <end position="291"/>
    </location>
</feature>
<feature type="strand" evidence="4">
    <location>
        <begin position="294"/>
        <end position="299"/>
    </location>
</feature>
<feature type="helix" evidence="4">
    <location>
        <begin position="343"/>
        <end position="350"/>
    </location>
</feature>
<feature type="strand" evidence="4">
    <location>
        <begin position="354"/>
        <end position="359"/>
    </location>
</feature>
<comment type="function">
    <text evidence="1">Catalyzes the conversion of D-ribulose 5-phosphate to formate and 3,4-dihydroxy-2-butanone 4-phosphate.</text>
</comment>
<comment type="function">
    <text evidence="1">Catalyzes the conversion of GTP to 2,5-diamino-6-ribosylamino-4(3H)-pyrimidinone 5'-phosphate (DARP), formate and pyrophosphate.</text>
</comment>
<comment type="catalytic activity">
    <reaction evidence="1">
        <text>D-ribulose 5-phosphate = (2S)-2-hydroxy-3-oxobutyl phosphate + formate + H(+)</text>
        <dbReference type="Rhea" id="RHEA:18457"/>
        <dbReference type="ChEBI" id="CHEBI:15378"/>
        <dbReference type="ChEBI" id="CHEBI:15740"/>
        <dbReference type="ChEBI" id="CHEBI:58121"/>
        <dbReference type="ChEBI" id="CHEBI:58830"/>
        <dbReference type="EC" id="4.1.99.12"/>
    </reaction>
</comment>
<comment type="catalytic activity">
    <reaction evidence="1">
        <text>GTP + 4 H2O = 2,5-diamino-6-hydroxy-4-(5-phosphoribosylamino)-pyrimidine + formate + 2 phosphate + 3 H(+)</text>
        <dbReference type="Rhea" id="RHEA:23704"/>
        <dbReference type="ChEBI" id="CHEBI:15377"/>
        <dbReference type="ChEBI" id="CHEBI:15378"/>
        <dbReference type="ChEBI" id="CHEBI:15740"/>
        <dbReference type="ChEBI" id="CHEBI:37565"/>
        <dbReference type="ChEBI" id="CHEBI:43474"/>
        <dbReference type="ChEBI" id="CHEBI:58614"/>
        <dbReference type="EC" id="3.5.4.25"/>
    </reaction>
</comment>
<comment type="cofactor">
    <cofactor evidence="1">
        <name>Mg(2+)</name>
        <dbReference type="ChEBI" id="CHEBI:18420"/>
    </cofactor>
    <cofactor evidence="1">
        <name>Mn(2+)</name>
        <dbReference type="ChEBI" id="CHEBI:29035"/>
    </cofactor>
    <text evidence="1">Binds 2 divalent metal cations per subunit. Magnesium or manganese.</text>
</comment>
<comment type="cofactor">
    <cofactor evidence="1">
        <name>Zn(2+)</name>
        <dbReference type="ChEBI" id="CHEBI:29105"/>
    </cofactor>
    <text evidence="1">Binds 1 zinc ion per subunit.</text>
</comment>
<comment type="pathway">
    <text evidence="1">Cofactor biosynthesis; riboflavin biosynthesis; 2-hydroxy-3-oxobutyl phosphate from D-ribulose 5-phosphate: step 1/1.</text>
</comment>
<comment type="pathway">
    <text evidence="1">Cofactor biosynthesis; riboflavin biosynthesis; 5-amino-6-(D-ribitylamino)uracil from GTP: step 1/4.</text>
</comment>
<comment type="similarity">
    <text evidence="1">In the N-terminal section; belongs to the DHBP synthase family.</text>
</comment>
<comment type="similarity">
    <text evidence="1">In the C-terminal section; belongs to the GTP cyclohydrolase II family.</text>
</comment>
<proteinExistence type="evidence at protein level"/>
<dbReference type="EC" id="4.1.99.12" evidence="1"/>
<dbReference type="EC" id="3.5.4.25" evidence="1"/>
<dbReference type="EMBL" id="CP000611">
    <property type="protein sequence ID" value="ABQ73167.1"/>
    <property type="molecule type" value="Genomic_DNA"/>
</dbReference>
<dbReference type="RefSeq" id="WP_003407334.1">
    <property type="nucleotide sequence ID" value="NZ_CP016972.1"/>
</dbReference>
<dbReference type="PDB" id="3MGZ">
    <property type="method" value="X-ray"/>
    <property type="resolution" value="2.07 A"/>
    <property type="chains" value="A=1-206"/>
</dbReference>
<dbReference type="PDB" id="3MIO">
    <property type="method" value="X-ray"/>
    <property type="resolution" value="1.80 A"/>
    <property type="chains" value="A/B=1-206"/>
</dbReference>
<dbReference type="PDB" id="3MK5">
    <property type="method" value="X-ray"/>
    <property type="resolution" value="2.06 A"/>
    <property type="chains" value="A=1-206"/>
</dbReference>
<dbReference type="PDB" id="4I14">
    <property type="method" value="X-ray"/>
    <property type="resolution" value="3.00 A"/>
    <property type="chains" value="A/B=1-425"/>
</dbReference>
<dbReference type="PDBsum" id="3MGZ"/>
<dbReference type="PDBsum" id="3MIO"/>
<dbReference type="PDBsum" id="3MK5"/>
<dbReference type="PDBsum" id="4I14"/>
<dbReference type="SMR" id="A5U2B7"/>
<dbReference type="KEGG" id="mra:MRA_1424"/>
<dbReference type="eggNOG" id="COG0108">
    <property type="taxonomic scope" value="Bacteria"/>
</dbReference>
<dbReference type="eggNOG" id="COG0807">
    <property type="taxonomic scope" value="Bacteria"/>
</dbReference>
<dbReference type="HOGENOM" id="CLU_020273_1_2_11"/>
<dbReference type="BRENDA" id="4.1.99.12">
    <property type="organism ID" value="3445"/>
</dbReference>
<dbReference type="UniPathway" id="UPA00275">
    <property type="reaction ID" value="UER00399"/>
</dbReference>
<dbReference type="UniPathway" id="UPA00275">
    <property type="reaction ID" value="UER00400"/>
</dbReference>
<dbReference type="EvolutionaryTrace" id="A5U2B7"/>
<dbReference type="Proteomes" id="UP000001988">
    <property type="component" value="Chromosome"/>
</dbReference>
<dbReference type="GO" id="GO:0005829">
    <property type="term" value="C:cytosol"/>
    <property type="evidence" value="ECO:0007669"/>
    <property type="project" value="TreeGrafter"/>
</dbReference>
<dbReference type="GO" id="GO:0008686">
    <property type="term" value="F:3,4-dihydroxy-2-butanone-4-phosphate synthase activity"/>
    <property type="evidence" value="ECO:0007669"/>
    <property type="project" value="UniProtKB-UniRule"/>
</dbReference>
<dbReference type="GO" id="GO:0005525">
    <property type="term" value="F:GTP binding"/>
    <property type="evidence" value="ECO:0007669"/>
    <property type="project" value="UniProtKB-KW"/>
</dbReference>
<dbReference type="GO" id="GO:0003935">
    <property type="term" value="F:GTP cyclohydrolase II activity"/>
    <property type="evidence" value="ECO:0007669"/>
    <property type="project" value="UniProtKB-UniRule"/>
</dbReference>
<dbReference type="GO" id="GO:0000287">
    <property type="term" value="F:magnesium ion binding"/>
    <property type="evidence" value="ECO:0007669"/>
    <property type="project" value="UniProtKB-UniRule"/>
</dbReference>
<dbReference type="GO" id="GO:0030145">
    <property type="term" value="F:manganese ion binding"/>
    <property type="evidence" value="ECO:0007669"/>
    <property type="project" value="UniProtKB-UniRule"/>
</dbReference>
<dbReference type="GO" id="GO:0008270">
    <property type="term" value="F:zinc ion binding"/>
    <property type="evidence" value="ECO:0007669"/>
    <property type="project" value="UniProtKB-UniRule"/>
</dbReference>
<dbReference type="GO" id="GO:0009231">
    <property type="term" value="P:riboflavin biosynthetic process"/>
    <property type="evidence" value="ECO:0007669"/>
    <property type="project" value="UniProtKB-UniRule"/>
</dbReference>
<dbReference type="CDD" id="cd00641">
    <property type="entry name" value="GTP_cyclohydro2"/>
    <property type="match status" value="1"/>
</dbReference>
<dbReference type="FunFam" id="3.40.50.10990:FF:000001">
    <property type="entry name" value="Riboflavin biosynthesis protein RibBA"/>
    <property type="match status" value="1"/>
</dbReference>
<dbReference type="FunFam" id="3.90.870.10:FF:000001">
    <property type="entry name" value="Riboflavin biosynthesis protein RibBA"/>
    <property type="match status" value="1"/>
</dbReference>
<dbReference type="Gene3D" id="3.90.870.10">
    <property type="entry name" value="DHBP synthase"/>
    <property type="match status" value="1"/>
</dbReference>
<dbReference type="Gene3D" id="3.40.50.10990">
    <property type="entry name" value="GTP cyclohydrolase II"/>
    <property type="match status" value="1"/>
</dbReference>
<dbReference type="HAMAP" id="MF_00179">
    <property type="entry name" value="RibA"/>
    <property type="match status" value="1"/>
</dbReference>
<dbReference type="HAMAP" id="MF_00180">
    <property type="entry name" value="RibB"/>
    <property type="match status" value="1"/>
</dbReference>
<dbReference type="HAMAP" id="MF_01283">
    <property type="entry name" value="RibBA"/>
    <property type="match status" value="1"/>
</dbReference>
<dbReference type="InterPro" id="IPR017945">
    <property type="entry name" value="DHBP_synth_RibB-like_a/b_dom"/>
</dbReference>
<dbReference type="InterPro" id="IPR000422">
    <property type="entry name" value="DHBP_synthase_RibB"/>
</dbReference>
<dbReference type="InterPro" id="IPR032677">
    <property type="entry name" value="GTP_cyclohydro_II"/>
</dbReference>
<dbReference type="InterPro" id="IPR000926">
    <property type="entry name" value="RibA"/>
</dbReference>
<dbReference type="InterPro" id="IPR036144">
    <property type="entry name" value="RibA-like_sf"/>
</dbReference>
<dbReference type="InterPro" id="IPR016299">
    <property type="entry name" value="Riboflavin_synth_RibBA"/>
</dbReference>
<dbReference type="NCBIfam" id="NF001591">
    <property type="entry name" value="PRK00393.1"/>
    <property type="match status" value="1"/>
</dbReference>
<dbReference type="NCBIfam" id="NF006803">
    <property type="entry name" value="PRK09311.1"/>
    <property type="match status" value="1"/>
</dbReference>
<dbReference type="NCBIfam" id="TIGR00505">
    <property type="entry name" value="ribA"/>
    <property type="match status" value="1"/>
</dbReference>
<dbReference type="NCBIfam" id="TIGR00506">
    <property type="entry name" value="ribB"/>
    <property type="match status" value="1"/>
</dbReference>
<dbReference type="PANTHER" id="PTHR21327:SF18">
    <property type="entry name" value="3,4-DIHYDROXY-2-BUTANONE 4-PHOSPHATE SYNTHASE"/>
    <property type="match status" value="1"/>
</dbReference>
<dbReference type="PANTHER" id="PTHR21327">
    <property type="entry name" value="GTP CYCLOHYDROLASE II-RELATED"/>
    <property type="match status" value="1"/>
</dbReference>
<dbReference type="Pfam" id="PF00926">
    <property type="entry name" value="DHBP_synthase"/>
    <property type="match status" value="1"/>
</dbReference>
<dbReference type="Pfam" id="PF00925">
    <property type="entry name" value="GTP_cyclohydro2"/>
    <property type="match status" value="1"/>
</dbReference>
<dbReference type="PIRSF" id="PIRSF001259">
    <property type="entry name" value="RibA"/>
    <property type="match status" value="1"/>
</dbReference>
<dbReference type="SUPFAM" id="SSF142695">
    <property type="entry name" value="RibA-like"/>
    <property type="match status" value="1"/>
</dbReference>
<dbReference type="SUPFAM" id="SSF55821">
    <property type="entry name" value="YrdC/RibB"/>
    <property type="match status" value="1"/>
</dbReference>
<gene>
    <name evidence="1" type="primary">ribBA</name>
    <name type="ordered locus">MRA_1424</name>
</gene>
<organism>
    <name type="scientific">Mycobacterium tuberculosis (strain ATCC 25177 / H37Ra)</name>
    <dbReference type="NCBI Taxonomy" id="419947"/>
    <lineage>
        <taxon>Bacteria</taxon>
        <taxon>Bacillati</taxon>
        <taxon>Actinomycetota</taxon>
        <taxon>Actinomycetes</taxon>
        <taxon>Mycobacteriales</taxon>
        <taxon>Mycobacteriaceae</taxon>
        <taxon>Mycobacterium</taxon>
        <taxon>Mycobacterium tuberculosis complex</taxon>
    </lineage>
</organism>
<evidence type="ECO:0000255" key="1">
    <source>
        <dbReference type="HAMAP-Rule" id="MF_01283"/>
    </source>
</evidence>
<evidence type="ECO:0007829" key="2">
    <source>
        <dbReference type="PDB" id="3MIO"/>
    </source>
</evidence>
<evidence type="ECO:0007829" key="3">
    <source>
        <dbReference type="PDB" id="3MK5"/>
    </source>
</evidence>
<evidence type="ECO:0007829" key="4">
    <source>
        <dbReference type="PDB" id="4I14"/>
    </source>
</evidence>
<reference key="1">
    <citation type="journal article" date="2008" name="PLoS ONE">
        <title>Genetic basis of virulence attenuation revealed by comparative genomic analysis of Mycobacterium tuberculosis strain H37Ra versus H37Rv.</title>
        <authorList>
            <person name="Zheng H."/>
            <person name="Lu L."/>
            <person name="Wang B."/>
            <person name="Pu S."/>
            <person name="Zhang X."/>
            <person name="Zhu G."/>
            <person name="Shi W."/>
            <person name="Zhang L."/>
            <person name="Wang H."/>
            <person name="Wang S."/>
            <person name="Zhao G."/>
            <person name="Zhang Y."/>
        </authorList>
    </citation>
    <scope>NUCLEOTIDE SEQUENCE [LARGE SCALE GENOMIC DNA]</scope>
    <source>
        <strain>ATCC 25177 / H37Ra</strain>
    </source>
</reference>
<sequence>MTRLDSVERAVADIAAGKAVIVIDDEDRENEGDLIFAAEKATPEMVAFMVRYTSGYLCVPLDGAICDRLGLLPMYAVNQDKHGTAYTVTVDARNGIGTGISASDRATTMRLLADPTSVADDFTRPGHVVPLRAKDGGVLRRPGHTEAAVDLARMAGLQPAGAICEIVSQKDEGSMAHTDELRVFADEHGLALITIADLIEWRRKHEKHIERVAEARIPTRHGEFRAIGYTSIYEDVEHVALVRGEIAGPNADGDDVLVRVHSECLTGDVFGSRRCDCGPQLDAALAMVAREGRGVVLYMRGHEGRGIGLMHKLQAYQLQDAGADTVDANLKLGLPADARDYGIGAQILVDLGVRSMRLLTNNPAKRVGLDGYGLHIIERVPLPVRANAENIRYLMTKRDKLGHDLAGLDDFHESVHLPGEFGGAL</sequence>
<name>RIBBA_MYCTA</name>
<accession>A5U2B7</accession>